<reference key="1">
    <citation type="journal article" date="2011" name="Biochimie">
        <title>Cloning and characterisation of novel cystatins from elapid snake venom glands.</title>
        <authorList>
            <person name="Richards R."/>
            <person name="St Pierre L."/>
            <person name="Trabi M."/>
            <person name="Johnson L.A."/>
            <person name="de Jersey J."/>
            <person name="Masci P.P."/>
            <person name="Lavin M.F."/>
        </authorList>
    </citation>
    <scope>NUCLEOTIDE SEQUENCE [MRNA]</scope>
    <source>
        <tissue>Venom gland</tissue>
    </source>
</reference>
<organism>
    <name type="scientific">Naja kaouthia</name>
    <name type="common">Monocled cobra</name>
    <name type="synonym">Naja siamensis</name>
    <dbReference type="NCBI Taxonomy" id="8649"/>
    <lineage>
        <taxon>Eukaryota</taxon>
        <taxon>Metazoa</taxon>
        <taxon>Chordata</taxon>
        <taxon>Craniata</taxon>
        <taxon>Vertebrata</taxon>
        <taxon>Euteleostomi</taxon>
        <taxon>Lepidosauria</taxon>
        <taxon>Squamata</taxon>
        <taxon>Bifurcata</taxon>
        <taxon>Unidentata</taxon>
        <taxon>Episquamata</taxon>
        <taxon>Toxicofera</taxon>
        <taxon>Serpentes</taxon>
        <taxon>Colubroidea</taxon>
        <taxon>Elapidae</taxon>
        <taxon>Elapinae</taxon>
        <taxon>Naja</taxon>
    </lineage>
</organism>
<protein>
    <recommendedName>
        <fullName>Cystatin</fullName>
    </recommendedName>
</protein>
<evidence type="ECO:0000250" key="1"/>
<evidence type="ECO:0000305" key="2"/>
<evidence type="ECO:0000305" key="3">
    <source>
    </source>
</evidence>
<feature type="signal peptide" evidence="1">
    <location>
        <begin position="1"/>
        <end position="26"/>
    </location>
</feature>
<feature type="chain" id="PRO_5000654431" description="Cystatin">
    <location>
        <begin position="27"/>
        <end position="141"/>
    </location>
</feature>
<feature type="domain" description="Cystatin">
    <location>
        <begin position="29"/>
        <end position="129"/>
    </location>
</feature>
<feature type="short sequence motif" description="Secondary area of contact" evidence="1">
    <location>
        <begin position="73"/>
        <end position="77"/>
    </location>
</feature>
<feature type="site" description="Reactive site" evidence="1">
    <location>
        <position position="29"/>
    </location>
</feature>
<feature type="disulfide bond" evidence="1">
    <location>
        <begin position="91"/>
        <end position="107"/>
    </location>
</feature>
<feature type="disulfide bond" evidence="1">
    <location>
        <begin position="120"/>
        <end position="140"/>
    </location>
</feature>
<accession>E3P6P4</accession>
<keyword id="KW-1015">Disulfide bond</keyword>
<keyword id="KW-0646">Protease inhibitor</keyword>
<keyword id="KW-0964">Secreted</keyword>
<keyword id="KW-0732">Signal</keyword>
<keyword id="KW-0789">Thiol protease inhibitor</keyword>
<proteinExistence type="evidence at transcript level"/>
<comment type="function">
    <text evidence="1">Inhibits various C1 cysteine proteases including cathepsin L, papain and cathepsin B. This protein has no toxic activity and its function in the venom is unknown. It may play a role as a housekeeping or regulatory protein (By similarity).</text>
</comment>
<comment type="subcellular location">
    <subcellularLocation>
        <location>Secreted</location>
    </subcellularLocation>
</comment>
<comment type="tissue specificity">
    <text evidence="3">Expressed at a low level by the venom gland (at protein level).</text>
</comment>
<comment type="miscellaneous">
    <text evidence="1">Negative results: the recombinant protein does not inhibit calpain-1 (CAPN1), a C2 family cysteine protease and legumain (LGMN), a C13 family cysteine protease. Does not provoke cell death (PC3 prostate cancer cells) (By similarity).</text>
</comment>
<comment type="similarity">
    <text evidence="2">Belongs to the cystatin family.</text>
</comment>
<dbReference type="EMBL" id="FJ411289">
    <property type="protein sequence ID" value="ACR83850.1"/>
    <property type="molecule type" value="mRNA"/>
</dbReference>
<dbReference type="SMR" id="E3P6P4"/>
<dbReference type="MEROPS" id="I25.012"/>
<dbReference type="GO" id="GO:0070062">
    <property type="term" value="C:extracellular exosome"/>
    <property type="evidence" value="ECO:0007669"/>
    <property type="project" value="TreeGrafter"/>
</dbReference>
<dbReference type="GO" id="GO:0004869">
    <property type="term" value="F:cysteine-type endopeptidase inhibitor activity"/>
    <property type="evidence" value="ECO:0007669"/>
    <property type="project" value="UniProtKB-KW"/>
</dbReference>
<dbReference type="CDD" id="cd00042">
    <property type="entry name" value="CY"/>
    <property type="match status" value="1"/>
</dbReference>
<dbReference type="FunFam" id="3.10.450.10:FF:000004">
    <property type="entry name" value="Cystatin C"/>
    <property type="match status" value="1"/>
</dbReference>
<dbReference type="Gene3D" id="3.10.450.10">
    <property type="match status" value="1"/>
</dbReference>
<dbReference type="InterPro" id="IPR000010">
    <property type="entry name" value="Cystatin_dom"/>
</dbReference>
<dbReference type="InterPro" id="IPR046350">
    <property type="entry name" value="Cystatin_sf"/>
</dbReference>
<dbReference type="InterPro" id="IPR018073">
    <property type="entry name" value="Prot_inh_cystat_CS"/>
</dbReference>
<dbReference type="PANTHER" id="PTHR47033">
    <property type="entry name" value="CYSTATIN-M"/>
    <property type="match status" value="1"/>
</dbReference>
<dbReference type="PANTHER" id="PTHR47033:SF1">
    <property type="entry name" value="CYSTATIN-M"/>
    <property type="match status" value="1"/>
</dbReference>
<dbReference type="Pfam" id="PF00031">
    <property type="entry name" value="Cystatin"/>
    <property type="match status" value="1"/>
</dbReference>
<dbReference type="SMART" id="SM00043">
    <property type="entry name" value="CY"/>
    <property type="match status" value="1"/>
</dbReference>
<dbReference type="SUPFAM" id="SSF54403">
    <property type="entry name" value="Cystatin/monellin"/>
    <property type="match status" value="1"/>
</dbReference>
<dbReference type="PROSITE" id="PS00287">
    <property type="entry name" value="CYSTATIN"/>
    <property type="match status" value="1"/>
</dbReference>
<sequence length="141" mass="15772">MVHFQLPVAAPLCLLCALLLLPSATMIPGGLSPRSVSDPDVQKAAAFAVQEYNARSANAHYYKELRVVEAQSQVVAGEKYYLMMELVKTKCAKTAGKPKVYKEIQNCELPPKAQQEKLTCHFQVWSRPWLDKTELTKMSCN</sequence>
<name>CYT_NAJKA</name>